<accession>B8JAU0</accession>
<protein>
    <recommendedName>
        <fullName evidence="1">UDP-N-acetylglucosamine 1-carboxyvinyltransferase</fullName>
        <ecNumber evidence="1">2.5.1.7</ecNumber>
    </recommendedName>
    <alternativeName>
        <fullName evidence="1">Enoylpyruvate transferase</fullName>
    </alternativeName>
    <alternativeName>
        <fullName evidence="1">UDP-N-acetylglucosamine enolpyruvyl transferase</fullName>
        <shortName evidence="1">EPT</shortName>
    </alternativeName>
</protein>
<sequence>MDKIVIEGGVPLRGSVDVSGAKNAALPVIAAALLAEGEHEVRNVPDLADVRTLGKLLGHMGCEVARGEGDRRTVRLRVPAAVAPEAPYELVKTMRASVLVLGPLLARLGRARVSLPGGCAIGARPIDQHLKALTALGAEIRLEHGYVNASVPRGRLRGTVFTFDAQTVTGTENVMMAAALADGETVLRNCAREPEVKDLGDALVAMGALVEGAGTDEIWIEGVPSLRPLSHAVIPDRIEAGTFLVAGALPGNDVTVRGCVAAHQEALVEKLRAVGAEVTKVEGGLRVVGDGRPRPVDVRTAPHPGFPTDMQAQLMVLLCLADGTSRITETVFENRFMHVQELIRLGAHVEVDGRVAMVKGVPELSGAPVMASDLRASAALVLAGLAASGTTEVLRVYHLDRGYERIEEKLAPLGARIRRVRG</sequence>
<evidence type="ECO:0000255" key="1">
    <source>
        <dbReference type="HAMAP-Rule" id="MF_00111"/>
    </source>
</evidence>
<proteinExistence type="inferred from homology"/>
<organism>
    <name type="scientific">Anaeromyxobacter dehalogenans (strain 2CP-1 / ATCC BAA-258)</name>
    <dbReference type="NCBI Taxonomy" id="455488"/>
    <lineage>
        <taxon>Bacteria</taxon>
        <taxon>Pseudomonadati</taxon>
        <taxon>Myxococcota</taxon>
        <taxon>Myxococcia</taxon>
        <taxon>Myxococcales</taxon>
        <taxon>Cystobacterineae</taxon>
        <taxon>Anaeromyxobacteraceae</taxon>
        <taxon>Anaeromyxobacter</taxon>
    </lineage>
</organism>
<keyword id="KW-0131">Cell cycle</keyword>
<keyword id="KW-0132">Cell division</keyword>
<keyword id="KW-0133">Cell shape</keyword>
<keyword id="KW-0961">Cell wall biogenesis/degradation</keyword>
<keyword id="KW-0963">Cytoplasm</keyword>
<keyword id="KW-0573">Peptidoglycan synthesis</keyword>
<keyword id="KW-0670">Pyruvate</keyword>
<keyword id="KW-0808">Transferase</keyword>
<reference key="1">
    <citation type="submission" date="2009-01" db="EMBL/GenBank/DDBJ databases">
        <title>Complete sequence of Anaeromyxobacter dehalogenans 2CP-1.</title>
        <authorList>
            <person name="Lucas S."/>
            <person name="Copeland A."/>
            <person name="Lapidus A."/>
            <person name="Glavina del Rio T."/>
            <person name="Dalin E."/>
            <person name="Tice H."/>
            <person name="Bruce D."/>
            <person name="Goodwin L."/>
            <person name="Pitluck S."/>
            <person name="Saunders E."/>
            <person name="Brettin T."/>
            <person name="Detter J.C."/>
            <person name="Han C."/>
            <person name="Larimer F."/>
            <person name="Land M."/>
            <person name="Hauser L."/>
            <person name="Kyrpides N."/>
            <person name="Ovchinnikova G."/>
            <person name="Beliaev A.S."/>
            <person name="Richardson P."/>
        </authorList>
    </citation>
    <scope>NUCLEOTIDE SEQUENCE [LARGE SCALE GENOMIC DNA]</scope>
    <source>
        <strain>2CP-1 / ATCC BAA-258</strain>
    </source>
</reference>
<gene>
    <name evidence="1" type="primary">murA</name>
    <name type="ordered locus">A2cp1_0394</name>
</gene>
<dbReference type="EC" id="2.5.1.7" evidence="1"/>
<dbReference type="EMBL" id="CP001359">
    <property type="protein sequence ID" value="ACL63751.1"/>
    <property type="molecule type" value="Genomic_DNA"/>
</dbReference>
<dbReference type="RefSeq" id="WP_012631805.1">
    <property type="nucleotide sequence ID" value="NC_011891.1"/>
</dbReference>
<dbReference type="SMR" id="B8JAU0"/>
<dbReference type="KEGG" id="acp:A2cp1_0394"/>
<dbReference type="HOGENOM" id="CLU_027387_0_0_7"/>
<dbReference type="UniPathway" id="UPA00219"/>
<dbReference type="Proteomes" id="UP000007089">
    <property type="component" value="Chromosome"/>
</dbReference>
<dbReference type="GO" id="GO:0005737">
    <property type="term" value="C:cytoplasm"/>
    <property type="evidence" value="ECO:0007669"/>
    <property type="project" value="UniProtKB-SubCell"/>
</dbReference>
<dbReference type="GO" id="GO:0008760">
    <property type="term" value="F:UDP-N-acetylglucosamine 1-carboxyvinyltransferase activity"/>
    <property type="evidence" value="ECO:0007669"/>
    <property type="project" value="UniProtKB-UniRule"/>
</dbReference>
<dbReference type="GO" id="GO:0051301">
    <property type="term" value="P:cell division"/>
    <property type="evidence" value="ECO:0007669"/>
    <property type="project" value="UniProtKB-KW"/>
</dbReference>
<dbReference type="GO" id="GO:0071555">
    <property type="term" value="P:cell wall organization"/>
    <property type="evidence" value="ECO:0007669"/>
    <property type="project" value="UniProtKB-KW"/>
</dbReference>
<dbReference type="GO" id="GO:0009252">
    <property type="term" value="P:peptidoglycan biosynthetic process"/>
    <property type="evidence" value="ECO:0007669"/>
    <property type="project" value="UniProtKB-UniRule"/>
</dbReference>
<dbReference type="GO" id="GO:0008360">
    <property type="term" value="P:regulation of cell shape"/>
    <property type="evidence" value="ECO:0007669"/>
    <property type="project" value="UniProtKB-KW"/>
</dbReference>
<dbReference type="GO" id="GO:0019277">
    <property type="term" value="P:UDP-N-acetylgalactosamine biosynthetic process"/>
    <property type="evidence" value="ECO:0007669"/>
    <property type="project" value="InterPro"/>
</dbReference>
<dbReference type="CDD" id="cd01555">
    <property type="entry name" value="UdpNAET"/>
    <property type="match status" value="1"/>
</dbReference>
<dbReference type="FunFam" id="3.65.10.10:FF:000001">
    <property type="entry name" value="UDP-N-acetylglucosamine 1-carboxyvinyltransferase"/>
    <property type="match status" value="1"/>
</dbReference>
<dbReference type="Gene3D" id="3.65.10.10">
    <property type="entry name" value="Enolpyruvate transferase domain"/>
    <property type="match status" value="2"/>
</dbReference>
<dbReference type="HAMAP" id="MF_00111">
    <property type="entry name" value="MurA"/>
    <property type="match status" value="1"/>
</dbReference>
<dbReference type="InterPro" id="IPR001986">
    <property type="entry name" value="Enolpyruvate_Tfrase_dom"/>
</dbReference>
<dbReference type="InterPro" id="IPR036968">
    <property type="entry name" value="Enolpyruvate_Tfrase_sf"/>
</dbReference>
<dbReference type="InterPro" id="IPR050068">
    <property type="entry name" value="MurA_subfamily"/>
</dbReference>
<dbReference type="InterPro" id="IPR013792">
    <property type="entry name" value="RNA3'P_cycl/enolpyr_Trfase_a/b"/>
</dbReference>
<dbReference type="InterPro" id="IPR005750">
    <property type="entry name" value="UDP_GlcNAc_COvinyl_MurA"/>
</dbReference>
<dbReference type="NCBIfam" id="TIGR01072">
    <property type="entry name" value="murA"/>
    <property type="match status" value="1"/>
</dbReference>
<dbReference type="NCBIfam" id="NF006873">
    <property type="entry name" value="PRK09369.1"/>
    <property type="match status" value="1"/>
</dbReference>
<dbReference type="PANTHER" id="PTHR43783">
    <property type="entry name" value="UDP-N-ACETYLGLUCOSAMINE 1-CARBOXYVINYLTRANSFERASE"/>
    <property type="match status" value="1"/>
</dbReference>
<dbReference type="PANTHER" id="PTHR43783:SF1">
    <property type="entry name" value="UDP-N-ACETYLGLUCOSAMINE 1-CARBOXYVINYLTRANSFERASE"/>
    <property type="match status" value="1"/>
</dbReference>
<dbReference type="Pfam" id="PF00275">
    <property type="entry name" value="EPSP_synthase"/>
    <property type="match status" value="1"/>
</dbReference>
<dbReference type="SUPFAM" id="SSF55205">
    <property type="entry name" value="EPT/RTPC-like"/>
    <property type="match status" value="1"/>
</dbReference>
<feature type="chain" id="PRO_1000192073" description="UDP-N-acetylglucosamine 1-carboxyvinyltransferase">
    <location>
        <begin position="1"/>
        <end position="422"/>
    </location>
</feature>
<feature type="active site" description="Proton donor" evidence="1">
    <location>
        <position position="119"/>
    </location>
</feature>
<feature type="binding site" evidence="1">
    <location>
        <begin position="22"/>
        <end position="23"/>
    </location>
    <ligand>
        <name>phosphoenolpyruvate</name>
        <dbReference type="ChEBI" id="CHEBI:58702"/>
    </ligand>
</feature>
<feature type="binding site" evidence="1">
    <location>
        <position position="95"/>
    </location>
    <ligand>
        <name>UDP-N-acetyl-alpha-D-glucosamine</name>
        <dbReference type="ChEBI" id="CHEBI:57705"/>
    </ligand>
</feature>
<feature type="binding site" evidence="1">
    <location>
        <begin position="124"/>
        <end position="128"/>
    </location>
    <ligand>
        <name>UDP-N-acetyl-alpha-D-glucosamine</name>
        <dbReference type="ChEBI" id="CHEBI:57705"/>
    </ligand>
</feature>
<feature type="binding site" evidence="1">
    <location>
        <position position="309"/>
    </location>
    <ligand>
        <name>UDP-N-acetyl-alpha-D-glucosamine</name>
        <dbReference type="ChEBI" id="CHEBI:57705"/>
    </ligand>
</feature>
<feature type="binding site" evidence="1">
    <location>
        <position position="331"/>
    </location>
    <ligand>
        <name>UDP-N-acetyl-alpha-D-glucosamine</name>
        <dbReference type="ChEBI" id="CHEBI:57705"/>
    </ligand>
</feature>
<feature type="modified residue" description="2-(S-cysteinyl)pyruvic acid O-phosphothioketal" evidence="1">
    <location>
        <position position="119"/>
    </location>
</feature>
<name>MURA_ANAD2</name>
<comment type="function">
    <text evidence="1">Cell wall formation. Adds enolpyruvyl to UDP-N-acetylglucosamine.</text>
</comment>
<comment type="catalytic activity">
    <reaction evidence="1">
        <text>phosphoenolpyruvate + UDP-N-acetyl-alpha-D-glucosamine = UDP-N-acetyl-3-O-(1-carboxyvinyl)-alpha-D-glucosamine + phosphate</text>
        <dbReference type="Rhea" id="RHEA:18681"/>
        <dbReference type="ChEBI" id="CHEBI:43474"/>
        <dbReference type="ChEBI" id="CHEBI:57705"/>
        <dbReference type="ChEBI" id="CHEBI:58702"/>
        <dbReference type="ChEBI" id="CHEBI:68483"/>
        <dbReference type="EC" id="2.5.1.7"/>
    </reaction>
</comment>
<comment type="pathway">
    <text evidence="1">Cell wall biogenesis; peptidoglycan biosynthesis.</text>
</comment>
<comment type="subcellular location">
    <subcellularLocation>
        <location evidence="1">Cytoplasm</location>
    </subcellularLocation>
</comment>
<comment type="similarity">
    <text evidence="1">Belongs to the EPSP synthase family. MurA subfamily.</text>
</comment>